<reference key="1">
    <citation type="journal article" date="2008" name="Antimicrob. Agents Chemother.">
        <title>Mutated response regulator graR is responsible for phenotypic conversion of Staphylococcus aureus from heterogeneous vancomycin-intermediate resistance to vancomycin-intermediate resistance.</title>
        <authorList>
            <person name="Neoh H.-M."/>
            <person name="Cui L."/>
            <person name="Yuzawa H."/>
            <person name="Takeuchi F."/>
            <person name="Matsuo M."/>
            <person name="Hiramatsu K."/>
        </authorList>
    </citation>
    <scope>NUCLEOTIDE SEQUENCE [LARGE SCALE GENOMIC DNA]</scope>
    <source>
        <strain>Mu3 / ATCC 700698</strain>
    </source>
</reference>
<sequence>MDFVNNDTRQIAKNLLGVKVIYQDTTQTYTGYIVETEAYLGLNDRAAHGYGGKITPKVTSLYKRGGTIYAHVMHTHLLINFVTKSEGIPEGVLIRAIEPEEGLSAMFRNRGKKGYEVTNGPGKWTKAFNIPRAIDGATLNDCRLSIDTKNRKYPKDIIASPRIGIPNKGDWTHKSLRYTVKGNPFVSRMRKSDCMFPEDTWK</sequence>
<organism>
    <name type="scientific">Staphylococcus aureus (strain Mu3 / ATCC 700698)</name>
    <dbReference type="NCBI Taxonomy" id="418127"/>
    <lineage>
        <taxon>Bacteria</taxon>
        <taxon>Bacillati</taxon>
        <taxon>Bacillota</taxon>
        <taxon>Bacilli</taxon>
        <taxon>Bacillales</taxon>
        <taxon>Staphylococcaceae</taxon>
        <taxon>Staphylococcus</taxon>
    </lineage>
</organism>
<proteinExistence type="inferred from homology"/>
<protein>
    <recommendedName>
        <fullName evidence="1">Putative 3-methyladenine DNA glycosylase</fullName>
        <ecNumber evidence="1">3.2.2.-</ecNumber>
    </recommendedName>
</protein>
<comment type="similarity">
    <text evidence="1">Belongs to the DNA glycosylase MPG family.</text>
</comment>
<evidence type="ECO:0000255" key="1">
    <source>
        <dbReference type="HAMAP-Rule" id="MF_00527"/>
    </source>
</evidence>
<feature type="chain" id="PRO_1000051000" description="Putative 3-methyladenine DNA glycosylase">
    <location>
        <begin position="1"/>
        <end position="202"/>
    </location>
</feature>
<dbReference type="EC" id="3.2.2.-" evidence="1"/>
<dbReference type="EMBL" id="AP009324">
    <property type="protein sequence ID" value="BAF79211.1"/>
    <property type="molecule type" value="Genomic_DNA"/>
</dbReference>
<dbReference type="RefSeq" id="WP_000348300.1">
    <property type="nucleotide sequence ID" value="NZ_CTYB01000041.1"/>
</dbReference>
<dbReference type="SMR" id="A7X5V7"/>
<dbReference type="KEGG" id="saw:SAHV_2328"/>
<dbReference type="HOGENOM" id="CLU_060471_2_0_9"/>
<dbReference type="GO" id="GO:0003905">
    <property type="term" value="F:alkylbase DNA N-glycosylase activity"/>
    <property type="evidence" value="ECO:0007669"/>
    <property type="project" value="InterPro"/>
</dbReference>
<dbReference type="GO" id="GO:0003677">
    <property type="term" value="F:DNA binding"/>
    <property type="evidence" value="ECO:0007669"/>
    <property type="project" value="InterPro"/>
</dbReference>
<dbReference type="GO" id="GO:0006284">
    <property type="term" value="P:base-excision repair"/>
    <property type="evidence" value="ECO:0007669"/>
    <property type="project" value="InterPro"/>
</dbReference>
<dbReference type="CDD" id="cd00540">
    <property type="entry name" value="AAG"/>
    <property type="match status" value="1"/>
</dbReference>
<dbReference type="FunFam" id="3.10.300.10:FF:000001">
    <property type="entry name" value="Putative 3-methyladenine DNA glycosylase"/>
    <property type="match status" value="1"/>
</dbReference>
<dbReference type="Gene3D" id="3.10.300.10">
    <property type="entry name" value="Methylpurine-DNA glycosylase (MPG)"/>
    <property type="match status" value="1"/>
</dbReference>
<dbReference type="HAMAP" id="MF_00527">
    <property type="entry name" value="3MGH"/>
    <property type="match status" value="1"/>
</dbReference>
<dbReference type="InterPro" id="IPR011034">
    <property type="entry name" value="Formyl_transferase-like_C_sf"/>
</dbReference>
<dbReference type="InterPro" id="IPR003180">
    <property type="entry name" value="MPG"/>
</dbReference>
<dbReference type="InterPro" id="IPR036995">
    <property type="entry name" value="MPG_sf"/>
</dbReference>
<dbReference type="NCBIfam" id="TIGR00567">
    <property type="entry name" value="3mg"/>
    <property type="match status" value="1"/>
</dbReference>
<dbReference type="PANTHER" id="PTHR10429">
    <property type="entry name" value="DNA-3-METHYLADENINE GLYCOSYLASE"/>
    <property type="match status" value="1"/>
</dbReference>
<dbReference type="PANTHER" id="PTHR10429:SF0">
    <property type="entry name" value="DNA-3-METHYLADENINE GLYCOSYLASE"/>
    <property type="match status" value="1"/>
</dbReference>
<dbReference type="Pfam" id="PF02245">
    <property type="entry name" value="Pur_DNA_glyco"/>
    <property type="match status" value="1"/>
</dbReference>
<dbReference type="SUPFAM" id="SSF50486">
    <property type="entry name" value="FMT C-terminal domain-like"/>
    <property type="match status" value="1"/>
</dbReference>
<accession>A7X5V7</accession>
<keyword id="KW-0227">DNA damage</keyword>
<keyword id="KW-0234">DNA repair</keyword>
<keyword id="KW-0378">Hydrolase</keyword>
<gene>
    <name type="ordered locus">SAHV_2328</name>
</gene>
<name>3MGH_STAA1</name>